<dbReference type="EC" id="1.-.-.-"/>
<dbReference type="EMBL" id="U31230">
    <property type="protein sequence ID" value="AAC44175.1"/>
    <property type="molecule type" value="Genomic_DNA"/>
</dbReference>
<dbReference type="EMBL" id="X82929">
    <property type="protein sequence ID" value="CAA58102.1"/>
    <property type="molecule type" value="Genomic_DNA"/>
</dbReference>
<dbReference type="PIR" id="S49979">
    <property type="entry name" value="S49979"/>
</dbReference>
<dbReference type="PIR" id="T50667">
    <property type="entry name" value="T50667"/>
</dbReference>
<dbReference type="SMR" id="P0C1E9"/>
<dbReference type="GO" id="GO:0051287">
    <property type="term" value="F:NAD binding"/>
    <property type="evidence" value="ECO:0007669"/>
    <property type="project" value="InterPro"/>
</dbReference>
<dbReference type="GO" id="GO:0016616">
    <property type="term" value="F:oxidoreductase activity, acting on the CH-OH group of donors, NAD or NADP as acceptor"/>
    <property type="evidence" value="ECO:0007669"/>
    <property type="project" value="UniProtKB-ARBA"/>
</dbReference>
<dbReference type="CDD" id="cd12159">
    <property type="entry name" value="2-Hacid_dh_2"/>
    <property type="match status" value="1"/>
</dbReference>
<dbReference type="Gene3D" id="3.40.50.720">
    <property type="entry name" value="NAD(P)-binding Rossmann-like Domain"/>
    <property type="match status" value="2"/>
</dbReference>
<dbReference type="InterPro" id="IPR029753">
    <property type="entry name" value="D-isomer_DH_CS"/>
</dbReference>
<dbReference type="InterPro" id="IPR006140">
    <property type="entry name" value="D-isomer_DH_NAD-bd"/>
</dbReference>
<dbReference type="InterPro" id="IPR036291">
    <property type="entry name" value="NAD(P)-bd_dom_sf"/>
</dbReference>
<dbReference type="PANTHER" id="PTHR43333">
    <property type="entry name" value="2-HACID_DH_C DOMAIN-CONTAINING PROTEIN"/>
    <property type="match status" value="1"/>
</dbReference>
<dbReference type="PANTHER" id="PTHR43333:SF1">
    <property type="entry name" value="D-ISOMER SPECIFIC 2-HYDROXYACID DEHYDROGENASE NAD-BINDING DOMAIN-CONTAINING PROTEIN"/>
    <property type="match status" value="1"/>
</dbReference>
<dbReference type="Pfam" id="PF02826">
    <property type="entry name" value="2-Hacid_dh_C"/>
    <property type="match status" value="1"/>
</dbReference>
<dbReference type="SUPFAM" id="SSF52283">
    <property type="entry name" value="Formate/glycerate dehydrogenase catalytic domain-like"/>
    <property type="match status" value="1"/>
</dbReference>
<dbReference type="SUPFAM" id="SSF51735">
    <property type="entry name" value="NAD(P)-binding Rossmann-fold domains"/>
    <property type="match status" value="1"/>
</dbReference>
<dbReference type="PROSITE" id="PS00670">
    <property type="entry name" value="D_2_HYDROXYACID_DH_2"/>
    <property type="match status" value="1"/>
</dbReference>
<dbReference type="PROSITE" id="PS00671">
    <property type="entry name" value="D_2_HYDROXYACID_DH_3"/>
    <property type="match status" value="1"/>
</dbReference>
<sequence length="304" mass="33037">MKFVMYPHLWESTTAVIEGGGHERVEDIKDADFIFFNGSAPEFPDLPENIKFVQASMAGIDALVKRGVVNEKARWANAAGLYADTVAESTIGLILAQMHMHAATRLAKSWSVRPEVENNKSWLHDNKTVAILGAGGIGVRLLEMLKPFNVKTIAVNNSGRPVEGADETFAMDKAEHVWAEADVFVLILPLTDATYQIVNAETLGKMKPSAVLVNVGRGPLINTDDLVDALNNGTIAGAALDVTDPEPLPDSHPLWEMDNVVITPHTANTNERIRALTGELTLRNIELFEAGEQMATEVDVVAGY</sequence>
<reference key="1">
    <citation type="journal article" date="1996" name="J. Bacteriol.">
        <title>Mutations in the Corynebacterium glutamicum proline biosynthetic pathway: a natural bypass of the proA step.</title>
        <authorList>
            <person name="Ankri S."/>
            <person name="Serebrijski I."/>
            <person name="Reyes O."/>
            <person name="Leblon G."/>
        </authorList>
    </citation>
    <scope>NUCLEOTIDE SEQUENCE [GENOMIC DNA]</scope>
    <source>
        <strain>ATCC 17965 / AS B-4821</strain>
    </source>
</reference>
<reference key="2">
    <citation type="journal article" date="1995" name="J. Bacteriol.">
        <title>Multicopy suppression by asd gene and osmotic stress-dependent complementation by heterologous proA in proA mutants.</title>
        <authorList>
            <person name="Serebrijski I."/>
            <person name="Wojcik F."/>
            <person name="Reyes O."/>
            <person name="Leblon G."/>
        </authorList>
    </citation>
    <scope>NUCLEOTIDE SEQUENCE [GENOMIC DNA] OF 229-304</scope>
    <source>
        <strain>ATCC 17965 / AS B-4821</strain>
    </source>
</reference>
<keyword id="KW-0520">NAD</keyword>
<keyword id="KW-0560">Oxidoreductase</keyword>
<protein>
    <recommendedName>
        <fullName>Uncharacterized protein in proB 3'region</fullName>
        <ecNumber>1.-.-.-</ecNumber>
    </recommendedName>
</protein>
<name>YPRB2_CORML</name>
<organism>
    <name type="scientific">Corynebacterium melassecola</name>
    <dbReference type="NCBI Taxonomy" id="41643"/>
    <lineage>
        <taxon>Bacteria</taxon>
        <taxon>Bacillati</taxon>
        <taxon>Actinomycetota</taxon>
        <taxon>Actinomycetes</taxon>
        <taxon>Mycobacteriales</taxon>
        <taxon>Corynebacteriaceae</taxon>
        <taxon>Corynebacterium</taxon>
    </lineage>
</organism>
<evidence type="ECO:0000250" key="1"/>
<evidence type="ECO:0000305" key="2"/>
<proteinExistence type="inferred from homology"/>
<feature type="chain" id="PRO_0000236033" description="Uncharacterized protein in proB 3'region">
    <location>
        <begin position="1"/>
        <end position="304"/>
    </location>
</feature>
<feature type="active site" evidence="1">
    <location>
        <position position="217"/>
    </location>
</feature>
<feature type="active site" evidence="1">
    <location>
        <position position="246"/>
    </location>
</feature>
<feature type="active site" description="Proton donor" evidence="1">
    <location>
        <position position="265"/>
    </location>
</feature>
<feature type="binding site" evidence="1">
    <location>
        <begin position="136"/>
        <end position="137"/>
    </location>
    <ligand>
        <name>NAD(+)</name>
        <dbReference type="ChEBI" id="CHEBI:57540"/>
    </ligand>
</feature>
<feature type="binding site" evidence="1">
    <location>
        <begin position="215"/>
        <end position="217"/>
    </location>
    <ligand>
        <name>NAD(+)</name>
        <dbReference type="ChEBI" id="CHEBI:57540"/>
    </ligand>
</feature>
<feature type="binding site" evidence="1">
    <location>
        <position position="241"/>
    </location>
    <ligand>
        <name>NAD(+)</name>
        <dbReference type="ChEBI" id="CHEBI:57540"/>
    </ligand>
</feature>
<feature type="binding site" evidence="1">
    <location>
        <begin position="265"/>
        <end position="268"/>
    </location>
    <ligand>
        <name>NAD(+)</name>
        <dbReference type="ChEBI" id="CHEBI:57540"/>
    </ligand>
</feature>
<accession>P0C1E9</accession>
<accession>P45637</accession>
<comment type="similarity">
    <text evidence="2">Belongs to the D-isomer specific 2-hydroxyacid dehydrogenase family.</text>
</comment>